<reference key="1">
    <citation type="journal article" date="2006" name="Proc. Natl. Acad. Sci. U.S.A.">
        <title>The partitioned Rhizobium etli genome: genetic and metabolic redundancy in seven interacting replicons.</title>
        <authorList>
            <person name="Gonzalez V."/>
            <person name="Santamaria R.I."/>
            <person name="Bustos P."/>
            <person name="Hernandez-Gonzalez I."/>
            <person name="Medrano-Soto A."/>
            <person name="Moreno-Hagelsieb G."/>
            <person name="Janga S.C."/>
            <person name="Ramirez M.A."/>
            <person name="Jimenez-Jacinto V."/>
            <person name="Collado-Vides J."/>
            <person name="Davila G."/>
        </authorList>
    </citation>
    <scope>NUCLEOTIDE SEQUENCE [LARGE SCALE GENOMIC DNA]</scope>
    <source>
        <strain>ATCC 51251 / DSM 11541 / JCM 21823 / NBRC 15573 / CFN 42</strain>
    </source>
</reference>
<name>MUTL_RHIEC</name>
<comment type="function">
    <text evidence="1">This protein is involved in the repair of mismatches in DNA. It is required for dam-dependent methyl-directed DNA mismatch repair. May act as a 'molecular matchmaker', a protein that promotes the formation of a stable complex between two or more DNA-binding proteins in an ATP-dependent manner without itself being part of a final effector complex.</text>
</comment>
<comment type="similarity">
    <text evidence="1">Belongs to the DNA mismatch repair MutL/HexB family.</text>
</comment>
<keyword id="KW-0227">DNA damage</keyword>
<keyword id="KW-0234">DNA repair</keyword>
<keyword id="KW-1185">Reference proteome</keyword>
<evidence type="ECO:0000255" key="1">
    <source>
        <dbReference type="HAMAP-Rule" id="MF_00149"/>
    </source>
</evidence>
<evidence type="ECO:0000256" key="2">
    <source>
        <dbReference type="SAM" id="MobiDB-lite"/>
    </source>
</evidence>
<dbReference type="EMBL" id="CP000133">
    <property type="protein sequence ID" value="ABC89659.1"/>
    <property type="molecule type" value="Genomic_DNA"/>
</dbReference>
<dbReference type="RefSeq" id="WP_011424197.1">
    <property type="nucleotide sequence ID" value="NC_007761.1"/>
</dbReference>
<dbReference type="SMR" id="Q2KBX7"/>
<dbReference type="KEGG" id="ret:RHE_CH00848"/>
<dbReference type="eggNOG" id="COG0323">
    <property type="taxonomic scope" value="Bacteria"/>
</dbReference>
<dbReference type="HOGENOM" id="CLU_004131_4_2_5"/>
<dbReference type="OrthoDB" id="9763467at2"/>
<dbReference type="Proteomes" id="UP000001936">
    <property type="component" value="Chromosome"/>
</dbReference>
<dbReference type="GO" id="GO:0032300">
    <property type="term" value="C:mismatch repair complex"/>
    <property type="evidence" value="ECO:0007669"/>
    <property type="project" value="InterPro"/>
</dbReference>
<dbReference type="GO" id="GO:0005524">
    <property type="term" value="F:ATP binding"/>
    <property type="evidence" value="ECO:0007669"/>
    <property type="project" value="InterPro"/>
</dbReference>
<dbReference type="GO" id="GO:0016887">
    <property type="term" value="F:ATP hydrolysis activity"/>
    <property type="evidence" value="ECO:0007669"/>
    <property type="project" value="InterPro"/>
</dbReference>
<dbReference type="GO" id="GO:0140664">
    <property type="term" value="F:ATP-dependent DNA damage sensor activity"/>
    <property type="evidence" value="ECO:0007669"/>
    <property type="project" value="InterPro"/>
</dbReference>
<dbReference type="GO" id="GO:0030983">
    <property type="term" value="F:mismatched DNA binding"/>
    <property type="evidence" value="ECO:0007669"/>
    <property type="project" value="InterPro"/>
</dbReference>
<dbReference type="GO" id="GO:0006298">
    <property type="term" value="P:mismatch repair"/>
    <property type="evidence" value="ECO:0007669"/>
    <property type="project" value="UniProtKB-UniRule"/>
</dbReference>
<dbReference type="CDD" id="cd16926">
    <property type="entry name" value="HATPase_MutL-MLH-PMS-like"/>
    <property type="match status" value="1"/>
</dbReference>
<dbReference type="CDD" id="cd00782">
    <property type="entry name" value="MutL_Trans"/>
    <property type="match status" value="1"/>
</dbReference>
<dbReference type="FunFam" id="3.30.565.10:FF:000003">
    <property type="entry name" value="DNA mismatch repair endonuclease MutL"/>
    <property type="match status" value="1"/>
</dbReference>
<dbReference type="Gene3D" id="3.30.230.10">
    <property type="match status" value="1"/>
</dbReference>
<dbReference type="Gene3D" id="3.30.565.10">
    <property type="entry name" value="Histidine kinase-like ATPase, C-terminal domain"/>
    <property type="match status" value="1"/>
</dbReference>
<dbReference type="Gene3D" id="3.30.1540.20">
    <property type="entry name" value="MutL, C-terminal domain, dimerisation subdomain"/>
    <property type="match status" value="1"/>
</dbReference>
<dbReference type="Gene3D" id="3.30.1370.100">
    <property type="entry name" value="MutL, C-terminal domain, regulatory subdomain"/>
    <property type="match status" value="1"/>
</dbReference>
<dbReference type="HAMAP" id="MF_00149">
    <property type="entry name" value="DNA_mis_repair"/>
    <property type="match status" value="1"/>
</dbReference>
<dbReference type="InterPro" id="IPR014762">
    <property type="entry name" value="DNA_mismatch_repair_CS"/>
</dbReference>
<dbReference type="InterPro" id="IPR020667">
    <property type="entry name" value="DNA_mismatch_repair_MutL"/>
</dbReference>
<dbReference type="InterPro" id="IPR013507">
    <property type="entry name" value="DNA_mismatch_S5_2-like"/>
</dbReference>
<dbReference type="InterPro" id="IPR036890">
    <property type="entry name" value="HATPase_C_sf"/>
</dbReference>
<dbReference type="InterPro" id="IPR002099">
    <property type="entry name" value="MutL/Mlh/PMS"/>
</dbReference>
<dbReference type="InterPro" id="IPR038973">
    <property type="entry name" value="MutL/Mlh/Pms-like"/>
</dbReference>
<dbReference type="InterPro" id="IPR014790">
    <property type="entry name" value="MutL_C"/>
</dbReference>
<dbReference type="InterPro" id="IPR042120">
    <property type="entry name" value="MutL_C_dimsub"/>
</dbReference>
<dbReference type="InterPro" id="IPR042121">
    <property type="entry name" value="MutL_C_regsub"/>
</dbReference>
<dbReference type="InterPro" id="IPR037198">
    <property type="entry name" value="MutL_C_sf"/>
</dbReference>
<dbReference type="InterPro" id="IPR020568">
    <property type="entry name" value="Ribosomal_Su5_D2-typ_SF"/>
</dbReference>
<dbReference type="InterPro" id="IPR014721">
    <property type="entry name" value="Ribsml_uS5_D2-typ_fold_subgr"/>
</dbReference>
<dbReference type="NCBIfam" id="TIGR00585">
    <property type="entry name" value="mutl"/>
    <property type="match status" value="1"/>
</dbReference>
<dbReference type="NCBIfam" id="NF000953">
    <property type="entry name" value="PRK00095.2-4"/>
    <property type="match status" value="1"/>
</dbReference>
<dbReference type="PANTHER" id="PTHR10073">
    <property type="entry name" value="DNA MISMATCH REPAIR PROTEIN MLH, PMS, MUTL"/>
    <property type="match status" value="1"/>
</dbReference>
<dbReference type="PANTHER" id="PTHR10073:SF12">
    <property type="entry name" value="DNA MISMATCH REPAIR PROTEIN MLH1"/>
    <property type="match status" value="1"/>
</dbReference>
<dbReference type="Pfam" id="PF01119">
    <property type="entry name" value="DNA_mis_repair"/>
    <property type="match status" value="1"/>
</dbReference>
<dbReference type="Pfam" id="PF13589">
    <property type="entry name" value="HATPase_c_3"/>
    <property type="match status" value="1"/>
</dbReference>
<dbReference type="Pfam" id="PF08676">
    <property type="entry name" value="MutL_C"/>
    <property type="match status" value="1"/>
</dbReference>
<dbReference type="SMART" id="SM01340">
    <property type="entry name" value="DNA_mis_repair"/>
    <property type="match status" value="1"/>
</dbReference>
<dbReference type="SMART" id="SM00853">
    <property type="entry name" value="MutL_C"/>
    <property type="match status" value="1"/>
</dbReference>
<dbReference type="SUPFAM" id="SSF55874">
    <property type="entry name" value="ATPase domain of HSP90 chaperone/DNA topoisomerase II/histidine kinase"/>
    <property type="match status" value="1"/>
</dbReference>
<dbReference type="SUPFAM" id="SSF118116">
    <property type="entry name" value="DNA mismatch repair protein MutL"/>
    <property type="match status" value="1"/>
</dbReference>
<dbReference type="SUPFAM" id="SSF54211">
    <property type="entry name" value="Ribosomal protein S5 domain 2-like"/>
    <property type="match status" value="1"/>
</dbReference>
<dbReference type="PROSITE" id="PS00058">
    <property type="entry name" value="DNA_MISMATCH_REPAIR_1"/>
    <property type="match status" value="1"/>
</dbReference>
<feature type="chain" id="PRO_1000010060" description="DNA mismatch repair protein MutL">
    <location>
        <begin position="1"/>
        <end position="610"/>
    </location>
</feature>
<feature type="region of interest" description="Disordered" evidence="2">
    <location>
        <begin position="351"/>
        <end position="406"/>
    </location>
</feature>
<sequence>MAIRQLSETLINQIAAGEVIERPASAAKELIENALDAGATRIEIATAGGGKALLRVSDNGSGMDAADLELAIRRHCTSKISETLEDIRTLGFRGEALPSIGSVARLSIASRKRDSAGGHEIAVAGGKVLHLRPAGANPGTIVEVRDLFFATPARLKFLKTEKAEAGAITEIVKRMAIAFPAVRFVLSGSDRATLEFPATGDDHLARMAQVLGKDFSDNAIALDAVREEISLTGFAGVPTFNRGNSAHQYAFVNGRPVQDKLILSAIRGAYAETIPSGRYPVAVLSIALDPALVDVNVHPAKSDVRFRDPGLVRGLIVGAIREALARDGSRAATTGASDMLRAFRPGFQPYGQRPQAPWSAETSPSRPYQPAPAFSERPQASFDGLSTPTARAEPQFSPDPVSPGLASPRPVAPETVGRYPLGAARAQIHANYIVAQTEDGLVIVDQHAAHERLVFEAMRKALHSKRLASQVLLIPEIVDIPEEDCDRLMLHAAEFAELGLAIERFGPGAIAVRETPAMLGEVDAHGLIRQLADEIAEWDTASGLSAKLEYVAATMACHGSVRSGRRLRPEEMNALLREMEVTPGSGQCNHGRPTYIELKLSDIERLFGRS</sequence>
<proteinExistence type="inferred from homology"/>
<protein>
    <recommendedName>
        <fullName evidence="1">DNA mismatch repair protein MutL</fullName>
    </recommendedName>
</protein>
<accession>Q2KBX7</accession>
<organism>
    <name type="scientific">Rhizobium etli (strain ATCC 51251 / DSM 11541 / JCM 21823 / NBRC 15573 / CFN 42)</name>
    <dbReference type="NCBI Taxonomy" id="347834"/>
    <lineage>
        <taxon>Bacteria</taxon>
        <taxon>Pseudomonadati</taxon>
        <taxon>Pseudomonadota</taxon>
        <taxon>Alphaproteobacteria</taxon>
        <taxon>Hyphomicrobiales</taxon>
        <taxon>Rhizobiaceae</taxon>
        <taxon>Rhizobium/Agrobacterium group</taxon>
        <taxon>Rhizobium</taxon>
    </lineage>
</organism>
<gene>
    <name evidence="1" type="primary">mutL</name>
    <name type="ordered locus">RHE_CH00848</name>
</gene>